<proteinExistence type="inferred from homology"/>
<protein>
    <recommendedName>
        <fullName evidence="1">Potassium-transporting ATPase KdpC subunit</fullName>
    </recommendedName>
    <alternativeName>
        <fullName evidence="1">ATP phosphohydrolase [potassium-transporting] C chain</fullName>
    </alternativeName>
    <alternativeName>
        <fullName evidence="1">Potassium-binding and translocating subunit C</fullName>
    </alternativeName>
    <alternativeName>
        <fullName evidence="1">Potassium-translocating ATPase C chain</fullName>
    </alternativeName>
</protein>
<feature type="chain" id="PRO_1000114740" description="Potassium-transporting ATPase KdpC subunit">
    <location>
        <begin position="1"/>
        <end position="194"/>
    </location>
</feature>
<feature type="transmembrane region" description="Helical" evidence="1">
    <location>
        <begin position="12"/>
        <end position="34"/>
    </location>
</feature>
<keyword id="KW-0067">ATP-binding</keyword>
<keyword id="KW-0997">Cell inner membrane</keyword>
<keyword id="KW-1003">Cell membrane</keyword>
<keyword id="KW-0406">Ion transport</keyword>
<keyword id="KW-0472">Membrane</keyword>
<keyword id="KW-0547">Nucleotide-binding</keyword>
<keyword id="KW-0630">Potassium</keyword>
<keyword id="KW-0633">Potassium transport</keyword>
<keyword id="KW-0812">Transmembrane</keyword>
<keyword id="KW-1133">Transmembrane helix</keyword>
<keyword id="KW-0813">Transport</keyword>
<organism>
    <name type="scientific">Salmonella gallinarum (strain 287/91 / NCTC 13346)</name>
    <dbReference type="NCBI Taxonomy" id="550538"/>
    <lineage>
        <taxon>Bacteria</taxon>
        <taxon>Pseudomonadati</taxon>
        <taxon>Pseudomonadota</taxon>
        <taxon>Gammaproteobacteria</taxon>
        <taxon>Enterobacterales</taxon>
        <taxon>Enterobacteriaceae</taxon>
        <taxon>Salmonella</taxon>
    </lineage>
</organism>
<dbReference type="EMBL" id="AM933173">
    <property type="protein sequence ID" value="CAR36597.1"/>
    <property type="molecule type" value="Genomic_DNA"/>
</dbReference>
<dbReference type="RefSeq" id="WP_001518103.1">
    <property type="nucleotide sequence ID" value="NC_011274.1"/>
</dbReference>
<dbReference type="SMR" id="B5R669"/>
<dbReference type="KEGG" id="seg:SG0701"/>
<dbReference type="HOGENOM" id="CLU_077094_2_0_6"/>
<dbReference type="Proteomes" id="UP000008321">
    <property type="component" value="Chromosome"/>
</dbReference>
<dbReference type="GO" id="GO:0005886">
    <property type="term" value="C:plasma membrane"/>
    <property type="evidence" value="ECO:0007669"/>
    <property type="project" value="UniProtKB-SubCell"/>
</dbReference>
<dbReference type="GO" id="GO:0005524">
    <property type="term" value="F:ATP binding"/>
    <property type="evidence" value="ECO:0007669"/>
    <property type="project" value="UniProtKB-UniRule"/>
</dbReference>
<dbReference type="GO" id="GO:0008556">
    <property type="term" value="F:P-type potassium transmembrane transporter activity"/>
    <property type="evidence" value="ECO:0007669"/>
    <property type="project" value="InterPro"/>
</dbReference>
<dbReference type="HAMAP" id="MF_00276">
    <property type="entry name" value="KdpC"/>
    <property type="match status" value="1"/>
</dbReference>
<dbReference type="InterPro" id="IPR003820">
    <property type="entry name" value="KdpC"/>
</dbReference>
<dbReference type="NCBIfam" id="TIGR00681">
    <property type="entry name" value="kdpC"/>
    <property type="match status" value="1"/>
</dbReference>
<dbReference type="NCBIfam" id="NF001454">
    <property type="entry name" value="PRK00315.1"/>
    <property type="match status" value="1"/>
</dbReference>
<dbReference type="PANTHER" id="PTHR30042">
    <property type="entry name" value="POTASSIUM-TRANSPORTING ATPASE C CHAIN"/>
    <property type="match status" value="1"/>
</dbReference>
<dbReference type="PANTHER" id="PTHR30042:SF2">
    <property type="entry name" value="POTASSIUM-TRANSPORTING ATPASE KDPC SUBUNIT"/>
    <property type="match status" value="1"/>
</dbReference>
<dbReference type="Pfam" id="PF02669">
    <property type="entry name" value="KdpC"/>
    <property type="match status" value="1"/>
</dbReference>
<dbReference type="PIRSF" id="PIRSF001296">
    <property type="entry name" value="K_ATPase_KdpC"/>
    <property type="match status" value="1"/>
</dbReference>
<reference key="1">
    <citation type="journal article" date="2008" name="Genome Res.">
        <title>Comparative genome analysis of Salmonella enteritidis PT4 and Salmonella gallinarum 287/91 provides insights into evolutionary and host adaptation pathways.</title>
        <authorList>
            <person name="Thomson N.R."/>
            <person name="Clayton D.J."/>
            <person name="Windhorst D."/>
            <person name="Vernikos G."/>
            <person name="Davidson S."/>
            <person name="Churcher C."/>
            <person name="Quail M.A."/>
            <person name="Stevens M."/>
            <person name="Jones M.A."/>
            <person name="Watson M."/>
            <person name="Barron A."/>
            <person name="Layton A."/>
            <person name="Pickard D."/>
            <person name="Kingsley R.A."/>
            <person name="Bignell A."/>
            <person name="Clark L."/>
            <person name="Harris B."/>
            <person name="Ormond D."/>
            <person name="Abdellah Z."/>
            <person name="Brooks K."/>
            <person name="Cherevach I."/>
            <person name="Chillingworth T."/>
            <person name="Woodward J."/>
            <person name="Norberczak H."/>
            <person name="Lord A."/>
            <person name="Arrowsmith C."/>
            <person name="Jagels K."/>
            <person name="Moule S."/>
            <person name="Mungall K."/>
            <person name="Saunders M."/>
            <person name="Whitehead S."/>
            <person name="Chabalgoity J.A."/>
            <person name="Maskell D."/>
            <person name="Humphreys T."/>
            <person name="Roberts M."/>
            <person name="Barrow P.A."/>
            <person name="Dougan G."/>
            <person name="Parkhill J."/>
        </authorList>
    </citation>
    <scope>NUCLEOTIDE SEQUENCE [LARGE SCALE GENOMIC DNA]</scope>
    <source>
        <strain>287/91 / NCTC 13346</strain>
    </source>
</reference>
<gene>
    <name evidence="1" type="primary">kdpC</name>
    <name type="ordered locus">SG0701</name>
</gene>
<comment type="function">
    <text evidence="1">Part of the high-affinity ATP-driven potassium transport (or Kdp) system, which catalyzes the hydrolysis of ATP coupled with the electrogenic transport of potassium into the cytoplasm. This subunit acts as a catalytic chaperone that increases the ATP-binding affinity of the ATP-hydrolyzing subunit KdpB by the formation of a transient KdpB/KdpC/ATP ternary complex.</text>
</comment>
<comment type="subunit">
    <text evidence="1">The system is composed of three essential subunits: KdpA, KdpB and KdpC.</text>
</comment>
<comment type="subcellular location">
    <subcellularLocation>
        <location evidence="1">Cell inner membrane</location>
        <topology evidence="1">Single-pass membrane protein</topology>
    </subcellularLocation>
</comment>
<comment type="similarity">
    <text evidence="1">Belongs to the KdpC family.</text>
</comment>
<sequence>MIGLRPAFSTMLFLLLLTGGVYPLLTTALGQWWFPWQANGSLIHKDNVIRGSALIGQSFTAAGYFHGRPSATADTPYNPLASGGSNLAASNPELDAQIQSRVAALRAANPQASSAVPVELATASASGLDNNLTPGAAAWQIPRVAAARQLPVEQVAQLVAEYTHRPLARFLGQPVVNIVELNLALDALQGHRAK</sequence>
<accession>B5R669</accession>
<name>KDPC_SALG2</name>
<evidence type="ECO:0000255" key="1">
    <source>
        <dbReference type="HAMAP-Rule" id="MF_00276"/>
    </source>
</evidence>